<name>SUSD4_HUMAN</name>
<accession>Q5VX71</accession>
<accession>D3DTB9</accession>
<accession>Q6UX62</accession>
<accession>Q9BSR0</accession>
<accession>Q9NWG0</accession>
<evidence type="ECO:0000255" key="1"/>
<evidence type="ECO:0000255" key="2">
    <source>
        <dbReference type="PROSITE-ProRule" id="PRU00302"/>
    </source>
</evidence>
<evidence type="ECO:0000256" key="3">
    <source>
        <dbReference type="SAM" id="MobiDB-lite"/>
    </source>
</evidence>
<evidence type="ECO:0000269" key="4">
    <source>
    </source>
</evidence>
<evidence type="ECO:0000303" key="5">
    <source>
    </source>
</evidence>
<evidence type="ECO:0000303" key="6">
    <source>
    </source>
</evidence>
<evidence type="ECO:0000303" key="7">
    <source>
    </source>
</evidence>
<evidence type="ECO:0000303" key="8">
    <source>
    </source>
</evidence>
<evidence type="ECO:0000305" key="9"/>
<evidence type="ECO:0000305" key="10">
    <source>
    </source>
</evidence>
<reference key="1">
    <citation type="journal article" date="2003" name="Genome Res.">
        <title>The secreted protein discovery initiative (SPDI), a large-scale effort to identify novel human secreted and transmembrane proteins: a bioinformatics assessment.</title>
        <authorList>
            <person name="Clark H.F."/>
            <person name="Gurney A.L."/>
            <person name="Abaya E."/>
            <person name="Baker K."/>
            <person name="Baldwin D.T."/>
            <person name="Brush J."/>
            <person name="Chen J."/>
            <person name="Chow B."/>
            <person name="Chui C."/>
            <person name="Crowley C."/>
            <person name="Currell B."/>
            <person name="Deuel B."/>
            <person name="Dowd P."/>
            <person name="Eaton D."/>
            <person name="Foster J.S."/>
            <person name="Grimaldi C."/>
            <person name="Gu Q."/>
            <person name="Hass P.E."/>
            <person name="Heldens S."/>
            <person name="Huang A."/>
            <person name="Kim H.S."/>
            <person name="Klimowski L."/>
            <person name="Jin Y."/>
            <person name="Johnson S."/>
            <person name="Lee J."/>
            <person name="Lewis L."/>
            <person name="Liao D."/>
            <person name="Mark M.R."/>
            <person name="Robbie E."/>
            <person name="Sanchez C."/>
            <person name="Schoenfeld J."/>
            <person name="Seshagiri S."/>
            <person name="Simmons L."/>
            <person name="Singh J."/>
            <person name="Smith V."/>
            <person name="Stinson J."/>
            <person name="Vagts A."/>
            <person name="Vandlen R.L."/>
            <person name="Watanabe C."/>
            <person name="Wieand D."/>
            <person name="Woods K."/>
            <person name="Xie M.-H."/>
            <person name="Yansura D.G."/>
            <person name="Yi S."/>
            <person name="Yu G."/>
            <person name="Yuan J."/>
            <person name="Zhang M."/>
            <person name="Zhang Z."/>
            <person name="Goddard A.D."/>
            <person name="Wood W.I."/>
            <person name="Godowski P.J."/>
            <person name="Gray A.M."/>
        </authorList>
    </citation>
    <scope>NUCLEOTIDE SEQUENCE [LARGE SCALE MRNA] (ISOFORM 2)</scope>
</reference>
<reference key="2">
    <citation type="journal article" date="2004" name="Nat. Genet.">
        <title>Complete sequencing and characterization of 21,243 full-length human cDNAs.</title>
        <authorList>
            <person name="Ota T."/>
            <person name="Suzuki Y."/>
            <person name="Nishikawa T."/>
            <person name="Otsuki T."/>
            <person name="Sugiyama T."/>
            <person name="Irie R."/>
            <person name="Wakamatsu A."/>
            <person name="Hayashi K."/>
            <person name="Sato H."/>
            <person name="Nagai K."/>
            <person name="Kimura K."/>
            <person name="Makita H."/>
            <person name="Sekine M."/>
            <person name="Obayashi M."/>
            <person name="Nishi T."/>
            <person name="Shibahara T."/>
            <person name="Tanaka T."/>
            <person name="Ishii S."/>
            <person name="Yamamoto J."/>
            <person name="Saito K."/>
            <person name="Kawai Y."/>
            <person name="Isono Y."/>
            <person name="Nakamura Y."/>
            <person name="Nagahari K."/>
            <person name="Murakami K."/>
            <person name="Yasuda T."/>
            <person name="Iwayanagi T."/>
            <person name="Wagatsuma M."/>
            <person name="Shiratori A."/>
            <person name="Sudo H."/>
            <person name="Hosoiri T."/>
            <person name="Kaku Y."/>
            <person name="Kodaira H."/>
            <person name="Kondo H."/>
            <person name="Sugawara M."/>
            <person name="Takahashi M."/>
            <person name="Kanda K."/>
            <person name="Yokoi T."/>
            <person name="Furuya T."/>
            <person name="Kikkawa E."/>
            <person name="Omura Y."/>
            <person name="Abe K."/>
            <person name="Kamihara K."/>
            <person name="Katsuta N."/>
            <person name="Sato K."/>
            <person name="Tanikawa M."/>
            <person name="Yamazaki M."/>
            <person name="Ninomiya K."/>
            <person name="Ishibashi T."/>
            <person name="Yamashita H."/>
            <person name="Murakawa K."/>
            <person name="Fujimori K."/>
            <person name="Tanai H."/>
            <person name="Kimata M."/>
            <person name="Watanabe M."/>
            <person name="Hiraoka S."/>
            <person name="Chiba Y."/>
            <person name="Ishida S."/>
            <person name="Ono Y."/>
            <person name="Takiguchi S."/>
            <person name="Watanabe S."/>
            <person name="Yosida M."/>
            <person name="Hotuta T."/>
            <person name="Kusano J."/>
            <person name="Kanehori K."/>
            <person name="Takahashi-Fujii A."/>
            <person name="Hara H."/>
            <person name="Tanase T.-O."/>
            <person name="Nomura Y."/>
            <person name="Togiya S."/>
            <person name="Komai F."/>
            <person name="Hara R."/>
            <person name="Takeuchi K."/>
            <person name="Arita M."/>
            <person name="Imose N."/>
            <person name="Musashino K."/>
            <person name="Yuuki H."/>
            <person name="Oshima A."/>
            <person name="Sasaki N."/>
            <person name="Aotsuka S."/>
            <person name="Yoshikawa Y."/>
            <person name="Matsunawa H."/>
            <person name="Ichihara T."/>
            <person name="Shiohata N."/>
            <person name="Sano S."/>
            <person name="Moriya S."/>
            <person name="Momiyama H."/>
            <person name="Satoh N."/>
            <person name="Takami S."/>
            <person name="Terashima Y."/>
            <person name="Suzuki O."/>
            <person name="Nakagawa S."/>
            <person name="Senoh A."/>
            <person name="Mizoguchi H."/>
            <person name="Goto Y."/>
            <person name="Shimizu F."/>
            <person name="Wakebe H."/>
            <person name="Hishigaki H."/>
            <person name="Watanabe T."/>
            <person name="Sugiyama A."/>
            <person name="Takemoto M."/>
            <person name="Kawakami B."/>
            <person name="Yamazaki M."/>
            <person name="Watanabe K."/>
            <person name="Kumagai A."/>
            <person name="Itakura S."/>
            <person name="Fukuzumi Y."/>
            <person name="Fujimori Y."/>
            <person name="Komiyama M."/>
            <person name="Tashiro H."/>
            <person name="Tanigami A."/>
            <person name="Fujiwara T."/>
            <person name="Ono T."/>
            <person name="Yamada K."/>
            <person name="Fujii Y."/>
            <person name="Ozaki K."/>
            <person name="Hirao M."/>
            <person name="Ohmori Y."/>
            <person name="Kawabata A."/>
            <person name="Hikiji T."/>
            <person name="Kobatake N."/>
            <person name="Inagaki H."/>
            <person name="Ikema Y."/>
            <person name="Okamoto S."/>
            <person name="Okitani R."/>
            <person name="Kawakami T."/>
            <person name="Noguchi S."/>
            <person name="Itoh T."/>
            <person name="Shigeta K."/>
            <person name="Senba T."/>
            <person name="Matsumura K."/>
            <person name="Nakajima Y."/>
            <person name="Mizuno T."/>
            <person name="Morinaga M."/>
            <person name="Sasaki M."/>
            <person name="Togashi T."/>
            <person name="Oyama M."/>
            <person name="Hata H."/>
            <person name="Watanabe M."/>
            <person name="Komatsu T."/>
            <person name="Mizushima-Sugano J."/>
            <person name="Satoh T."/>
            <person name="Shirai Y."/>
            <person name="Takahashi Y."/>
            <person name="Nakagawa K."/>
            <person name="Okumura K."/>
            <person name="Nagase T."/>
            <person name="Nomura N."/>
            <person name="Kikuchi H."/>
            <person name="Masuho Y."/>
            <person name="Yamashita R."/>
            <person name="Nakai K."/>
            <person name="Yada T."/>
            <person name="Nakamura Y."/>
            <person name="Ohara O."/>
            <person name="Isogai T."/>
            <person name="Sugano S."/>
        </authorList>
    </citation>
    <scope>NUCLEOTIDE SEQUENCE [LARGE SCALE MRNA] (ISOFORM 4)</scope>
    <source>
        <tissue>Embryo</tissue>
    </source>
</reference>
<reference key="3">
    <citation type="journal article" date="2006" name="Nature">
        <title>The DNA sequence and biological annotation of human chromosome 1.</title>
        <authorList>
            <person name="Gregory S.G."/>
            <person name="Barlow K.F."/>
            <person name="McLay K.E."/>
            <person name="Kaul R."/>
            <person name="Swarbreck D."/>
            <person name="Dunham A."/>
            <person name="Scott C.E."/>
            <person name="Howe K.L."/>
            <person name="Woodfine K."/>
            <person name="Spencer C.C.A."/>
            <person name="Jones M.C."/>
            <person name="Gillson C."/>
            <person name="Searle S."/>
            <person name="Zhou Y."/>
            <person name="Kokocinski F."/>
            <person name="McDonald L."/>
            <person name="Evans R."/>
            <person name="Phillips K."/>
            <person name="Atkinson A."/>
            <person name="Cooper R."/>
            <person name="Jones C."/>
            <person name="Hall R.E."/>
            <person name="Andrews T.D."/>
            <person name="Lloyd C."/>
            <person name="Ainscough R."/>
            <person name="Almeida J.P."/>
            <person name="Ambrose K.D."/>
            <person name="Anderson F."/>
            <person name="Andrew R.W."/>
            <person name="Ashwell R.I.S."/>
            <person name="Aubin K."/>
            <person name="Babbage A.K."/>
            <person name="Bagguley C.L."/>
            <person name="Bailey J."/>
            <person name="Beasley H."/>
            <person name="Bethel G."/>
            <person name="Bird C.P."/>
            <person name="Bray-Allen S."/>
            <person name="Brown J.Y."/>
            <person name="Brown A.J."/>
            <person name="Buckley D."/>
            <person name="Burton J."/>
            <person name="Bye J."/>
            <person name="Carder C."/>
            <person name="Chapman J.C."/>
            <person name="Clark S.Y."/>
            <person name="Clarke G."/>
            <person name="Clee C."/>
            <person name="Cobley V."/>
            <person name="Collier R.E."/>
            <person name="Corby N."/>
            <person name="Coville G.J."/>
            <person name="Davies J."/>
            <person name="Deadman R."/>
            <person name="Dunn M."/>
            <person name="Earthrowl M."/>
            <person name="Ellington A.G."/>
            <person name="Errington H."/>
            <person name="Frankish A."/>
            <person name="Frankland J."/>
            <person name="French L."/>
            <person name="Garner P."/>
            <person name="Garnett J."/>
            <person name="Gay L."/>
            <person name="Ghori M.R.J."/>
            <person name="Gibson R."/>
            <person name="Gilby L.M."/>
            <person name="Gillett W."/>
            <person name="Glithero R.J."/>
            <person name="Grafham D.V."/>
            <person name="Griffiths C."/>
            <person name="Griffiths-Jones S."/>
            <person name="Grocock R."/>
            <person name="Hammond S."/>
            <person name="Harrison E.S.I."/>
            <person name="Hart E."/>
            <person name="Haugen E."/>
            <person name="Heath P.D."/>
            <person name="Holmes S."/>
            <person name="Holt K."/>
            <person name="Howden P.J."/>
            <person name="Hunt A.R."/>
            <person name="Hunt S.E."/>
            <person name="Hunter G."/>
            <person name="Isherwood J."/>
            <person name="James R."/>
            <person name="Johnson C."/>
            <person name="Johnson D."/>
            <person name="Joy A."/>
            <person name="Kay M."/>
            <person name="Kershaw J.K."/>
            <person name="Kibukawa M."/>
            <person name="Kimberley A.M."/>
            <person name="King A."/>
            <person name="Knights A.J."/>
            <person name="Lad H."/>
            <person name="Laird G."/>
            <person name="Lawlor S."/>
            <person name="Leongamornlert D.A."/>
            <person name="Lloyd D.M."/>
            <person name="Loveland J."/>
            <person name="Lovell J."/>
            <person name="Lush M.J."/>
            <person name="Lyne R."/>
            <person name="Martin S."/>
            <person name="Mashreghi-Mohammadi M."/>
            <person name="Matthews L."/>
            <person name="Matthews N.S.W."/>
            <person name="McLaren S."/>
            <person name="Milne S."/>
            <person name="Mistry S."/>
            <person name="Moore M.J.F."/>
            <person name="Nickerson T."/>
            <person name="O'Dell C.N."/>
            <person name="Oliver K."/>
            <person name="Palmeiri A."/>
            <person name="Palmer S.A."/>
            <person name="Parker A."/>
            <person name="Patel D."/>
            <person name="Pearce A.V."/>
            <person name="Peck A.I."/>
            <person name="Pelan S."/>
            <person name="Phelps K."/>
            <person name="Phillimore B.J."/>
            <person name="Plumb R."/>
            <person name="Rajan J."/>
            <person name="Raymond C."/>
            <person name="Rouse G."/>
            <person name="Saenphimmachak C."/>
            <person name="Sehra H.K."/>
            <person name="Sheridan E."/>
            <person name="Shownkeen R."/>
            <person name="Sims S."/>
            <person name="Skuce C.D."/>
            <person name="Smith M."/>
            <person name="Steward C."/>
            <person name="Subramanian S."/>
            <person name="Sycamore N."/>
            <person name="Tracey A."/>
            <person name="Tromans A."/>
            <person name="Van Helmond Z."/>
            <person name="Wall M."/>
            <person name="Wallis J.M."/>
            <person name="White S."/>
            <person name="Whitehead S.L."/>
            <person name="Wilkinson J.E."/>
            <person name="Willey D.L."/>
            <person name="Williams H."/>
            <person name="Wilming L."/>
            <person name="Wray P.W."/>
            <person name="Wu Z."/>
            <person name="Coulson A."/>
            <person name="Vaudin M."/>
            <person name="Sulston J.E."/>
            <person name="Durbin R.M."/>
            <person name="Hubbard T."/>
            <person name="Wooster R."/>
            <person name="Dunham I."/>
            <person name="Carter N.P."/>
            <person name="McVean G."/>
            <person name="Ross M.T."/>
            <person name="Harrow J."/>
            <person name="Olson M.V."/>
            <person name="Beck S."/>
            <person name="Rogers J."/>
            <person name="Bentley D.R."/>
        </authorList>
    </citation>
    <scope>NUCLEOTIDE SEQUENCE [LARGE SCALE GENOMIC DNA]</scope>
    <scope>ALTERNATIVE SPLICING</scope>
</reference>
<reference key="4">
    <citation type="submission" date="2005-09" db="EMBL/GenBank/DDBJ databases">
        <authorList>
            <person name="Mural R.J."/>
            <person name="Istrail S."/>
            <person name="Sutton G.G."/>
            <person name="Florea L."/>
            <person name="Halpern A.L."/>
            <person name="Mobarry C.M."/>
            <person name="Lippert R."/>
            <person name="Walenz B."/>
            <person name="Shatkay H."/>
            <person name="Dew I."/>
            <person name="Miller J.R."/>
            <person name="Flanigan M.J."/>
            <person name="Edwards N.J."/>
            <person name="Bolanos R."/>
            <person name="Fasulo D."/>
            <person name="Halldorsson B.V."/>
            <person name="Hannenhalli S."/>
            <person name="Turner R."/>
            <person name="Yooseph S."/>
            <person name="Lu F."/>
            <person name="Nusskern D.R."/>
            <person name="Shue B.C."/>
            <person name="Zheng X.H."/>
            <person name="Zhong F."/>
            <person name="Delcher A.L."/>
            <person name="Huson D.H."/>
            <person name="Kravitz S.A."/>
            <person name="Mouchard L."/>
            <person name="Reinert K."/>
            <person name="Remington K.A."/>
            <person name="Clark A.G."/>
            <person name="Waterman M.S."/>
            <person name="Eichler E.E."/>
            <person name="Adams M.D."/>
            <person name="Hunkapiller M.W."/>
            <person name="Myers E.W."/>
            <person name="Venter J.C."/>
        </authorList>
    </citation>
    <scope>NUCLEOTIDE SEQUENCE [LARGE SCALE GENOMIC DNA]</scope>
</reference>
<reference key="5">
    <citation type="journal article" date="2004" name="Genome Res.">
        <title>The status, quality, and expansion of the NIH full-length cDNA project: the Mammalian Gene Collection (MGC).</title>
        <authorList>
            <consortium name="The MGC Project Team"/>
        </authorList>
    </citation>
    <scope>NUCLEOTIDE SEQUENCE [LARGE SCALE MRNA] (ISOFORM 3)</scope>
    <source>
        <tissue>Ovary</tissue>
    </source>
</reference>
<reference key="6">
    <citation type="journal article" date="2013" name="FASEB J.">
        <title>Sushi domain-containing protein 4 (SUSD4) inhibits complement by disrupting the formation of the classical C3 convertase.</title>
        <authorList>
            <person name="Holmquist E."/>
            <person name="Okroj M."/>
            <person name="Nodin B."/>
            <person name="Jirstrom K."/>
            <person name="Blom A.M."/>
        </authorList>
    </citation>
    <scope>TISSUE SPECIFICITY</scope>
    <scope>FUNCTION</scope>
    <scope>SUBCELLULAR LOCATION</scope>
</reference>
<proteinExistence type="evidence at protein level"/>
<comment type="function">
    <text evidence="4">Acts as a complement inhibitor by disrupting the formation of the classical C3 convertase. Isoform 3 inhibits the classical complement pathway, while membrane-bound isoform 1 inhibits deposition of C3b via both the classical and alternative complement pathways.</text>
</comment>
<comment type="interaction">
    <interactant intactId="EBI-12017810">
        <id>Q5VX71-3</id>
    </interactant>
    <interactant intactId="EBI-16439278">
        <id>Q6FHY5</id>
        <label>MEOX2</label>
    </interactant>
    <organismsDiffer>false</organismsDiffer>
    <experiments>3</experiments>
</comment>
<comment type="interaction">
    <interactant intactId="EBI-12017810">
        <id>Q5VX71-3</id>
    </interactant>
    <interactant intactId="EBI-947187">
        <id>Q9UHD9</id>
        <label>UBQLN2</label>
    </interactant>
    <organismsDiffer>false</organismsDiffer>
    <experiments>3</experiments>
</comment>
<comment type="subcellular location">
    <molecule>Isoform 1</molecule>
    <subcellularLocation>
        <location evidence="9">Membrane</location>
        <topology evidence="9">Single-pass type I membrane protein</topology>
    </subcellularLocation>
</comment>
<comment type="subcellular location">
    <molecule>Isoform 3</molecule>
    <subcellularLocation>
        <location evidence="10">Secreted</location>
    </subcellularLocation>
</comment>
<comment type="alternative products">
    <event type="alternative splicing"/>
    <isoform>
        <id>Q5VX71-1</id>
        <name>1</name>
        <name evidence="8">SUSD4a</name>
        <sequence type="displayed"/>
    </isoform>
    <isoform>
        <id>Q5VX71-2</id>
        <name>2</name>
        <sequence type="described" ref="VSP_020840 VSP_020843"/>
    </isoform>
    <isoform>
        <id>Q5VX71-3</id>
        <name>3</name>
        <name evidence="8">SUSD4b</name>
        <sequence type="described" ref="VSP_020841 VSP_020842"/>
    </isoform>
    <isoform>
        <id>Q5VX71-4</id>
        <name>4</name>
        <sequence type="described" ref="VSP_020838 VSP_020839"/>
    </isoform>
</comment>
<comment type="tissue specificity">
    <text evidence="4">Isoform 3 is the predominant isoform in all tissues except cortex, cerebellum, kidney, and breast. Isoform 1 is found primarily in the esophagus and the brain.</text>
</comment>
<feature type="signal peptide" evidence="1">
    <location>
        <begin position="1"/>
        <end position="41"/>
    </location>
</feature>
<feature type="chain" id="PRO_0000251975" description="Sushi domain-containing protein 4">
    <location>
        <begin position="42"/>
        <end position="490"/>
    </location>
</feature>
<feature type="topological domain" description="Extracellular" evidence="1">
    <location>
        <begin position="42"/>
        <end position="319"/>
    </location>
</feature>
<feature type="transmembrane region" description="Helical" evidence="1">
    <location>
        <begin position="320"/>
        <end position="340"/>
    </location>
</feature>
<feature type="topological domain" description="Cytoplasmic" evidence="1">
    <location>
        <begin position="341"/>
        <end position="490"/>
    </location>
</feature>
<feature type="domain" description="Sushi 1" evidence="2">
    <location>
        <begin position="55"/>
        <end position="119"/>
    </location>
</feature>
<feature type="domain" description="Sushi 2" evidence="2">
    <location>
        <begin position="120"/>
        <end position="179"/>
    </location>
</feature>
<feature type="domain" description="Sushi 3" evidence="2">
    <location>
        <begin position="178"/>
        <end position="239"/>
    </location>
</feature>
<feature type="domain" description="Sushi 4" evidence="2">
    <location>
        <begin position="241"/>
        <end position="304"/>
    </location>
</feature>
<feature type="region of interest" description="Disordered" evidence="3">
    <location>
        <begin position="1"/>
        <end position="21"/>
    </location>
</feature>
<feature type="region of interest" description="Disordered" evidence="3">
    <location>
        <begin position="401"/>
        <end position="490"/>
    </location>
</feature>
<feature type="compositionally biased region" description="Polar residues" evidence="3">
    <location>
        <begin position="430"/>
        <end position="456"/>
    </location>
</feature>
<feature type="compositionally biased region" description="Acidic residues" evidence="3">
    <location>
        <begin position="479"/>
        <end position="490"/>
    </location>
</feature>
<feature type="glycosylation site" description="N-linked (GlcNAc...) asparagine" evidence="1">
    <location>
        <position position="104"/>
    </location>
</feature>
<feature type="glycosylation site" description="N-linked (GlcNAc...) asparagine" evidence="1">
    <location>
        <position position="134"/>
    </location>
</feature>
<feature type="glycosylation site" description="N-linked (GlcNAc...) asparagine" evidence="1">
    <location>
        <position position="192"/>
    </location>
</feature>
<feature type="disulfide bond" evidence="2">
    <location>
        <begin position="57"/>
        <end position="99"/>
    </location>
</feature>
<feature type="disulfide bond" evidence="2">
    <location>
        <begin position="85"/>
        <end position="117"/>
    </location>
</feature>
<feature type="disulfide bond" evidence="2">
    <location>
        <begin position="122"/>
        <end position="165"/>
    </location>
</feature>
<feature type="disulfide bond" evidence="2">
    <location>
        <begin position="147"/>
        <end position="177"/>
    </location>
</feature>
<feature type="disulfide bond" evidence="2">
    <location>
        <begin position="180"/>
        <end position="224"/>
    </location>
</feature>
<feature type="disulfide bond" evidence="2">
    <location>
        <begin position="210"/>
        <end position="237"/>
    </location>
</feature>
<feature type="disulfide bond" evidence="2">
    <location>
        <begin position="243"/>
        <end position="289"/>
    </location>
</feature>
<feature type="disulfide bond" evidence="2">
    <location>
        <begin position="274"/>
        <end position="302"/>
    </location>
</feature>
<feature type="splice variant" id="VSP_020838" description="In isoform 4." evidence="6">
    <original>SSNGYVNISELQTSFPVGTVISYRCFPGFKLDGSAYLECLQNLIWSSSPPR</original>
    <variation>PQHTPAQGTRTQAQGSQKPVTASQALLSCSKVCIHLPGAKRAPTLLRTTLT</variation>
    <location>
        <begin position="186"/>
        <end position="236"/>
    </location>
</feature>
<feature type="splice variant" id="VSP_020839" description="In isoform 4." evidence="6">
    <location>
        <begin position="237"/>
        <end position="490"/>
    </location>
</feature>
<feature type="splice variant" id="VSP_020840" description="In isoform 2." evidence="5">
    <original>E</original>
    <variation>EAQ</variation>
    <location>
        <position position="241"/>
    </location>
</feature>
<feature type="splice variant" id="VSP_020841" description="In isoform 3." evidence="7">
    <original>VCPLPPMVSHGDFVCHPRPCERYNHGTVVEFYCDPGYSLTSDYKYITCQ</original>
    <variation>GGRPEHLFPVLYFPHIRLAAAVLYFCPVLKSSPTPAPTCSSTSTTTSLF</variation>
    <location>
        <begin position="242"/>
        <end position="290"/>
    </location>
</feature>
<feature type="splice variant" id="VSP_020842" description="In isoform 3." evidence="7">
    <location>
        <begin position="291"/>
        <end position="490"/>
    </location>
</feature>
<feature type="splice variant" id="VSP_020843" description="In isoform 2." evidence="5">
    <original>DIADEIPLMEEDP</original>
    <variation>HHAHWVLFLRN</variation>
    <location>
        <begin position="478"/>
        <end position="490"/>
    </location>
</feature>
<keyword id="KW-0025">Alternative splicing</keyword>
<keyword id="KW-0180">Complement pathway</keyword>
<keyword id="KW-1015">Disulfide bond</keyword>
<keyword id="KW-0325">Glycoprotein</keyword>
<keyword id="KW-0391">Immunity</keyword>
<keyword id="KW-0399">Innate immunity</keyword>
<keyword id="KW-0472">Membrane</keyword>
<keyword id="KW-1267">Proteomics identification</keyword>
<keyword id="KW-1185">Reference proteome</keyword>
<keyword id="KW-0677">Repeat</keyword>
<keyword id="KW-0964">Secreted</keyword>
<keyword id="KW-0732">Signal</keyword>
<keyword id="KW-0768">Sushi</keyword>
<keyword id="KW-0812">Transmembrane</keyword>
<keyword id="KW-1133">Transmembrane helix</keyword>
<protein>
    <recommendedName>
        <fullName>Sushi domain-containing protein 4</fullName>
    </recommendedName>
</protein>
<organism>
    <name type="scientific">Homo sapiens</name>
    <name type="common">Human</name>
    <dbReference type="NCBI Taxonomy" id="9606"/>
    <lineage>
        <taxon>Eukaryota</taxon>
        <taxon>Metazoa</taxon>
        <taxon>Chordata</taxon>
        <taxon>Craniata</taxon>
        <taxon>Vertebrata</taxon>
        <taxon>Euteleostomi</taxon>
        <taxon>Mammalia</taxon>
        <taxon>Eutheria</taxon>
        <taxon>Euarchontoglires</taxon>
        <taxon>Primates</taxon>
        <taxon>Haplorrhini</taxon>
        <taxon>Catarrhini</taxon>
        <taxon>Hominidae</taxon>
        <taxon>Homo</taxon>
    </lineage>
</organism>
<sequence length="490" mass="53778">MYHGMNPSNGDGFLEQQQQQQQPQSPQRLLAVILWFQLALCFGPAQLTGGFDDLQVCADPGIPENGFRTPSGGVFFEGSVARFHCQDGFKLKGATKRLCLKHFNGTLGWIPSDNSICVQEDCRIPQIEDAEIHNKTYRHGEKLIITCHEGFKIRYPDLHNMVSLCRDDGTWNNLPICQGCLRPLASSNGYVNISELQTSFPVGTVISYRCFPGFKLDGSAYLECLQNLIWSSSPPRCLALEVCPLPPMVSHGDFVCHPRPCERYNHGTVVEFYCDPGYSLTSDYKYITCQYGEWFPSYQVYCIKSEQTWPSTHETLLTTWKIVAFTATSVLLVLLLVILARMFQTKFKAHFPPRGPPRSSSSDPDFVVVDGVPVMLPSYDEAVSGGLSALGPGYMASVGQGCPLPVDDQSPPAYPGSGDTDTGPGESETCDSVSGSSELLQSLYSPPRCQESTHPASDNPDIIASTAEEVASTSPGIDIADEIPLMEEDP</sequence>
<gene>
    <name type="primary">SUSD4</name>
    <name type="ORF">UNQ196/PRO222</name>
</gene>
<dbReference type="EMBL" id="AY358495">
    <property type="protein sequence ID" value="AAQ88859.1"/>
    <property type="molecule type" value="mRNA"/>
</dbReference>
<dbReference type="EMBL" id="AK000914">
    <property type="protein sequence ID" value="BAA91421.1"/>
    <property type="molecule type" value="mRNA"/>
</dbReference>
<dbReference type="EMBL" id="AL359733">
    <property type="status" value="NOT_ANNOTATED_CDS"/>
    <property type="molecule type" value="Genomic_DNA"/>
</dbReference>
<dbReference type="EMBL" id="AL359979">
    <property type="status" value="NOT_ANNOTATED_CDS"/>
    <property type="molecule type" value="Genomic_DNA"/>
</dbReference>
<dbReference type="EMBL" id="CH471100">
    <property type="protein sequence ID" value="EAW93260.1"/>
    <property type="molecule type" value="Genomic_DNA"/>
</dbReference>
<dbReference type="EMBL" id="CH471100">
    <property type="protein sequence ID" value="EAW93261.1"/>
    <property type="molecule type" value="Genomic_DNA"/>
</dbReference>
<dbReference type="EMBL" id="BC004888">
    <property type="protein sequence ID" value="AAH04888.1"/>
    <property type="molecule type" value="mRNA"/>
</dbReference>
<dbReference type="CCDS" id="CCDS31034.1">
    <molecule id="Q5VX71-3"/>
</dbReference>
<dbReference type="CCDS" id="CCDS41471.1">
    <molecule id="Q5VX71-1"/>
</dbReference>
<dbReference type="RefSeq" id="NP_001032252.1">
    <molecule id="Q5VX71-3"/>
    <property type="nucleotide sequence ID" value="NM_001037175.3"/>
</dbReference>
<dbReference type="RefSeq" id="NP_060452.3">
    <molecule id="Q5VX71-1"/>
    <property type="nucleotide sequence ID" value="NM_017982.4"/>
</dbReference>
<dbReference type="RefSeq" id="XP_016857076.1">
    <molecule id="Q5VX71-1"/>
    <property type="nucleotide sequence ID" value="XM_017001587.2"/>
</dbReference>
<dbReference type="RefSeq" id="XP_016857077.1">
    <property type="nucleotide sequence ID" value="XM_017001588.1"/>
</dbReference>
<dbReference type="RefSeq" id="XP_047279675.1">
    <molecule id="Q5VX71-3"/>
    <property type="nucleotide sequence ID" value="XM_047423719.1"/>
</dbReference>
<dbReference type="RefSeq" id="XP_054193282.1">
    <molecule id="Q5VX71-1"/>
    <property type="nucleotide sequence ID" value="XM_054337307.1"/>
</dbReference>
<dbReference type="RefSeq" id="XP_054193285.1">
    <molecule id="Q5VX71-3"/>
    <property type="nucleotide sequence ID" value="XM_054337310.1"/>
</dbReference>
<dbReference type="SMR" id="Q5VX71"/>
<dbReference type="BioGRID" id="120379">
    <property type="interactions" value="49"/>
</dbReference>
<dbReference type="FunCoup" id="Q5VX71">
    <property type="interactions" value="16"/>
</dbReference>
<dbReference type="IntAct" id="Q5VX71">
    <property type="interactions" value="39"/>
</dbReference>
<dbReference type="MINT" id="Q5VX71"/>
<dbReference type="STRING" id="9606.ENSP00000344219"/>
<dbReference type="GlyCosmos" id="Q5VX71">
    <property type="glycosylation" value="3 sites, No reported glycans"/>
</dbReference>
<dbReference type="GlyGen" id="Q5VX71">
    <property type="glycosylation" value="3 sites, 1 N-linked glycan (1 site)"/>
</dbReference>
<dbReference type="iPTMnet" id="Q5VX71"/>
<dbReference type="PhosphoSitePlus" id="Q5VX71"/>
<dbReference type="BioMuta" id="SUSD4"/>
<dbReference type="DMDM" id="74747494"/>
<dbReference type="jPOST" id="Q5VX71"/>
<dbReference type="MassIVE" id="Q5VX71"/>
<dbReference type="PaxDb" id="9606-ENSP00000344219"/>
<dbReference type="PeptideAtlas" id="Q5VX71"/>
<dbReference type="Antibodypedia" id="34634">
    <property type="antibodies" value="72 antibodies from 15 providers"/>
</dbReference>
<dbReference type="DNASU" id="55061"/>
<dbReference type="Ensembl" id="ENST00000343846.7">
    <molecule id="Q5VX71-1"/>
    <property type="protein sequence ID" value="ENSP00000344219.3"/>
    <property type="gene ID" value="ENSG00000143502.16"/>
</dbReference>
<dbReference type="Ensembl" id="ENST00000344029.6">
    <molecule id="Q5VX71-3"/>
    <property type="protein sequence ID" value="ENSP00000339926.6"/>
    <property type="gene ID" value="ENSG00000143502.16"/>
</dbReference>
<dbReference type="Ensembl" id="ENST00000366878.9">
    <molecule id="Q5VX71-1"/>
    <property type="protein sequence ID" value="ENSP00000355843.4"/>
    <property type="gene ID" value="ENSG00000143502.16"/>
</dbReference>
<dbReference type="Ensembl" id="ENST00000681305.1">
    <molecule id="Q5VX71-1"/>
    <property type="protein sequence ID" value="ENSP00000505262.1"/>
    <property type="gene ID" value="ENSG00000143502.16"/>
</dbReference>
<dbReference type="Ensembl" id="ENST00000681669.1">
    <molecule id="Q5VX71-1"/>
    <property type="protein sequence ID" value="ENSP00000505495.1"/>
    <property type="gene ID" value="ENSG00000143502.16"/>
</dbReference>
<dbReference type="GeneID" id="55061"/>
<dbReference type="KEGG" id="hsa:55061"/>
<dbReference type="MANE-Select" id="ENST00000366878.9">
    <property type="protein sequence ID" value="ENSP00000355843.4"/>
    <property type="RefSeq nucleotide sequence ID" value="NM_017982.4"/>
    <property type="RefSeq protein sequence ID" value="NP_060452.3"/>
</dbReference>
<dbReference type="UCSC" id="uc001hnx.3">
    <molecule id="Q5VX71-1"/>
    <property type="organism name" value="human"/>
</dbReference>
<dbReference type="AGR" id="HGNC:25470"/>
<dbReference type="CTD" id="55061"/>
<dbReference type="DisGeNET" id="55061"/>
<dbReference type="GeneCards" id="SUSD4"/>
<dbReference type="HGNC" id="HGNC:25470">
    <property type="gene designation" value="SUSD4"/>
</dbReference>
<dbReference type="HPA" id="ENSG00000143502">
    <property type="expression patterns" value="Tissue enhanced (brain, esophagus)"/>
</dbReference>
<dbReference type="MIM" id="615827">
    <property type="type" value="gene"/>
</dbReference>
<dbReference type="neXtProt" id="NX_Q5VX71"/>
<dbReference type="OpenTargets" id="ENSG00000143502"/>
<dbReference type="PharmGKB" id="PA142670855"/>
<dbReference type="VEuPathDB" id="HostDB:ENSG00000143502"/>
<dbReference type="eggNOG" id="ENOG502QU1F">
    <property type="taxonomic scope" value="Eukaryota"/>
</dbReference>
<dbReference type="GeneTree" id="ENSGT00940000160410"/>
<dbReference type="HOGENOM" id="CLU_077058_0_0_1"/>
<dbReference type="InParanoid" id="Q5VX71"/>
<dbReference type="OMA" id="MIEHGDY"/>
<dbReference type="OrthoDB" id="7487745at2759"/>
<dbReference type="PAN-GO" id="Q5VX71">
    <property type="GO annotations" value="2 GO annotations based on evolutionary models"/>
</dbReference>
<dbReference type="PhylomeDB" id="Q5VX71"/>
<dbReference type="TreeFam" id="TF332459"/>
<dbReference type="PathwayCommons" id="Q5VX71"/>
<dbReference type="SignaLink" id="Q5VX71"/>
<dbReference type="BioGRID-ORCS" id="55061">
    <property type="hits" value="10 hits in 1142 CRISPR screens"/>
</dbReference>
<dbReference type="ChiTaRS" id="SUSD4">
    <property type="organism name" value="human"/>
</dbReference>
<dbReference type="GenomeRNAi" id="55061"/>
<dbReference type="Pharos" id="Q5VX71">
    <property type="development level" value="Tbio"/>
</dbReference>
<dbReference type="PRO" id="PR:Q5VX71"/>
<dbReference type="Proteomes" id="UP000005640">
    <property type="component" value="Chromosome 1"/>
</dbReference>
<dbReference type="RNAct" id="Q5VX71">
    <property type="molecule type" value="protein"/>
</dbReference>
<dbReference type="Bgee" id="ENSG00000143502">
    <property type="expression patterns" value="Expressed in lower esophagus mucosa and 171 other cell types or tissues"/>
</dbReference>
<dbReference type="ExpressionAtlas" id="Q5VX71">
    <property type="expression patterns" value="baseline and differential"/>
</dbReference>
<dbReference type="GO" id="GO:0005576">
    <property type="term" value="C:extracellular region"/>
    <property type="evidence" value="ECO:0007669"/>
    <property type="project" value="UniProtKB-SubCell"/>
</dbReference>
<dbReference type="GO" id="GO:0098688">
    <property type="term" value="C:parallel fiber to Purkinje cell synapse"/>
    <property type="evidence" value="ECO:0007669"/>
    <property type="project" value="Ensembl"/>
</dbReference>
<dbReference type="GO" id="GO:0045211">
    <property type="term" value="C:postsynaptic membrane"/>
    <property type="evidence" value="ECO:0007669"/>
    <property type="project" value="Ensembl"/>
</dbReference>
<dbReference type="GO" id="GO:0006958">
    <property type="term" value="P:complement activation, classical pathway"/>
    <property type="evidence" value="ECO:0007669"/>
    <property type="project" value="UniProtKB-KW"/>
</dbReference>
<dbReference type="GO" id="GO:0045087">
    <property type="term" value="P:innate immune response"/>
    <property type="evidence" value="ECO:0007669"/>
    <property type="project" value="UniProtKB-KW"/>
</dbReference>
<dbReference type="GO" id="GO:0045957">
    <property type="term" value="P:negative regulation of complement activation, alternative pathway"/>
    <property type="evidence" value="ECO:0000314"/>
    <property type="project" value="UniProtKB"/>
</dbReference>
<dbReference type="GO" id="GO:0045959">
    <property type="term" value="P:negative regulation of complement activation, classical pathway"/>
    <property type="evidence" value="ECO:0000314"/>
    <property type="project" value="UniProtKB"/>
</dbReference>
<dbReference type="GO" id="GO:0030449">
    <property type="term" value="P:regulation of complement activation"/>
    <property type="evidence" value="ECO:0000314"/>
    <property type="project" value="UniProtKB"/>
</dbReference>
<dbReference type="GO" id="GO:0099149">
    <property type="term" value="P:regulation of postsynaptic neurotransmitter receptor internalization"/>
    <property type="evidence" value="ECO:0007669"/>
    <property type="project" value="Ensembl"/>
</dbReference>
<dbReference type="CDD" id="cd00033">
    <property type="entry name" value="CCP"/>
    <property type="match status" value="4"/>
</dbReference>
<dbReference type="FunFam" id="2.10.70.10:FF:000030">
    <property type="entry name" value="Sushi domain-containing protein 4"/>
    <property type="match status" value="1"/>
</dbReference>
<dbReference type="FunFam" id="2.10.70.10:FF:000063">
    <property type="entry name" value="Sushi domain-containing protein 4"/>
    <property type="match status" value="1"/>
</dbReference>
<dbReference type="FunFam" id="2.10.70.10:FF:000121">
    <property type="entry name" value="Sushi domain-containing protein 4"/>
    <property type="match status" value="1"/>
</dbReference>
<dbReference type="FunFam" id="2.10.70.10:FF:000140">
    <property type="entry name" value="Sushi domain-containing protein 4"/>
    <property type="match status" value="1"/>
</dbReference>
<dbReference type="Gene3D" id="2.10.70.10">
    <property type="entry name" value="Complement Module, domain 1"/>
    <property type="match status" value="4"/>
</dbReference>
<dbReference type="InterPro" id="IPR042985">
    <property type="entry name" value="SUSD4"/>
</dbReference>
<dbReference type="InterPro" id="IPR035976">
    <property type="entry name" value="Sushi/SCR/CCP_sf"/>
</dbReference>
<dbReference type="InterPro" id="IPR000436">
    <property type="entry name" value="Sushi_SCR_CCP_dom"/>
</dbReference>
<dbReference type="PANTHER" id="PTHR47007">
    <property type="entry name" value="SUSHI DOMAIN-CONTAINING PROTEIN 4"/>
    <property type="match status" value="1"/>
</dbReference>
<dbReference type="PANTHER" id="PTHR47007:SF1">
    <property type="entry name" value="SUSHI DOMAIN-CONTAINING PROTEIN 4"/>
    <property type="match status" value="1"/>
</dbReference>
<dbReference type="Pfam" id="PF00084">
    <property type="entry name" value="Sushi"/>
    <property type="match status" value="4"/>
</dbReference>
<dbReference type="SMART" id="SM00032">
    <property type="entry name" value="CCP"/>
    <property type="match status" value="4"/>
</dbReference>
<dbReference type="SUPFAM" id="SSF57535">
    <property type="entry name" value="Complement control module/SCR domain"/>
    <property type="match status" value="4"/>
</dbReference>
<dbReference type="PROSITE" id="PS50923">
    <property type="entry name" value="SUSHI"/>
    <property type="match status" value="4"/>
</dbReference>